<accession>P28700</accession>
<sequence>MDTKHFLPLDFSTQVNSSSLNSPTGRGSMAVPSLHPSLGPGIGSPLGSPGQLHSPISTLSSPINGMGPPFSVISSPMGPHSMSVPTTPTLGFGTGSPQLNSPMNPVSSTEDIKPPLGLNGVLKVPAHPSGNMASFTKHICAICGDRSSGKHYGVYSCEGCKGFFKRTVRKDLTYTCRDNKDCLIDKRQRNRCQYCRYQKCLAMGMKREAVQEERQRGKDRNENEVESTSSANEDMPVEKILEAELAVEPKTETYVEANMGLNPSSPNDPVTNICQAADKQLFTLVEWAKRIPHFSELPLDDQVILLRAGWNELLIASFSHRSIAVKDGILLATGLHVHRNSAHSAGVGAIFDRVLTELVSKMRDMQMDKTELGCLRAIVLFNPDSKGLSNPAEVEALREKVYASLEAYCKHKYPEQPGRFAKLLLRLPALRSIGLKCLEHLFFFKLIGDTPIDTFLMEMLEAPHQAT</sequence>
<dbReference type="EMBL" id="M84817">
    <property type="protein sequence ID" value="AAA40080.1"/>
    <property type="molecule type" value="mRNA"/>
</dbReference>
<dbReference type="EMBL" id="X66223">
    <property type="protein sequence ID" value="CAA46962.1"/>
    <property type="molecule type" value="mRNA"/>
</dbReference>
<dbReference type="CCDS" id="CCDS15830.1"/>
<dbReference type="PIR" id="S26668">
    <property type="entry name" value="S26668"/>
</dbReference>
<dbReference type="RefSeq" id="NP_035435.1">
    <property type="nucleotide sequence ID" value="NM_011305.3"/>
</dbReference>
<dbReference type="PDB" id="1DKF">
    <property type="method" value="X-ray"/>
    <property type="resolution" value="2.50 A"/>
    <property type="chains" value="A=230-462"/>
</dbReference>
<dbReference type="PDB" id="1XDK">
    <property type="method" value="X-ray"/>
    <property type="resolution" value="2.90 A"/>
    <property type="chains" value="A/E=230-467"/>
</dbReference>
<dbReference type="PDB" id="3A9E">
    <property type="method" value="X-ray"/>
    <property type="resolution" value="2.75 A"/>
    <property type="chains" value="A=228-467"/>
</dbReference>
<dbReference type="PDB" id="7AOS">
    <property type="method" value="X-ray"/>
    <property type="resolution" value="2.55 A"/>
    <property type="chains" value="A=230-467"/>
</dbReference>
<dbReference type="PDB" id="7PDQ">
    <property type="method" value="X-ray"/>
    <property type="resolution" value="1.58 A"/>
    <property type="chains" value="A=227-467"/>
</dbReference>
<dbReference type="PDB" id="7PDT">
    <property type="method" value="X-ray"/>
    <property type="resolution" value="3.30 A"/>
    <property type="chains" value="A/B=227-467"/>
</dbReference>
<dbReference type="PDB" id="7QAA">
    <property type="method" value="X-ray"/>
    <property type="resolution" value="2.76 A"/>
    <property type="chains" value="A=230-462"/>
</dbReference>
<dbReference type="PDB" id="8J54">
    <property type="method" value="X-ray"/>
    <property type="resolution" value="2.72 A"/>
    <property type="chains" value="C/D/E/F=135-217"/>
</dbReference>
<dbReference type="PDBsum" id="1DKF"/>
<dbReference type="PDBsum" id="1XDK"/>
<dbReference type="PDBsum" id="3A9E"/>
<dbReference type="PDBsum" id="7AOS"/>
<dbReference type="PDBsum" id="7PDQ"/>
<dbReference type="PDBsum" id="7PDT"/>
<dbReference type="PDBsum" id="7QAA"/>
<dbReference type="PDBsum" id="8J54"/>
<dbReference type="BMRB" id="P28700"/>
<dbReference type="SASBDB" id="P28700"/>
<dbReference type="SMR" id="P28700"/>
<dbReference type="BioGRID" id="203038">
    <property type="interactions" value="24"/>
</dbReference>
<dbReference type="ComplexPortal" id="CPX-505">
    <property type="entry name" value="RXRalpha-PXR nuclear receptor complex"/>
</dbReference>
<dbReference type="ComplexPortal" id="CPX-5343">
    <property type="entry name" value="RXRalpha-NCOA1 activated retinoic acid receptor complex"/>
</dbReference>
<dbReference type="ComplexPortal" id="CPX-584">
    <property type="entry name" value="RXRalpha-RARalpha retinoic acid receptor complex"/>
</dbReference>
<dbReference type="ComplexPortal" id="CPX-643">
    <property type="entry name" value="RXRalpha-NCOA2 activated retinoic acid receptor complex"/>
</dbReference>
<dbReference type="ComplexPortal" id="CPX-672">
    <property type="entry name" value="RXRalpha-RXRalpha retinoic acid receptor complex"/>
</dbReference>
<dbReference type="ComplexPortal" id="CPX-673">
    <property type="entry name" value="RXRalpha-VDR nuclear hormone receptor complex"/>
</dbReference>
<dbReference type="ComplexPortal" id="CPX-679">
    <property type="entry name" value="RXRalpha-LXRbeta nuclear hormone receptor complex"/>
</dbReference>
<dbReference type="ComplexPortal" id="CPX-708">
    <property type="entry name" value="RXRalpha-LXRalpha nuclear hormone receptor complex"/>
</dbReference>
<dbReference type="ComplexPortal" id="CPX-710">
    <property type="entry name" value="RXRalpha-TRbeta nuclear hormone receptor complex"/>
</dbReference>
<dbReference type="ComplexPortal" id="CPX-713">
    <property type="entry name" value="RXRalpha-TRalpha nuclear hormone receptor complex"/>
</dbReference>
<dbReference type="ComplexPortal" id="CPX-818">
    <property type="entry name" value="RXRalpha-RARalpha-NCOA2 retinoic acid receptor complex"/>
</dbReference>
<dbReference type="CORUM" id="P28700"/>
<dbReference type="FunCoup" id="P28700">
    <property type="interactions" value="1018"/>
</dbReference>
<dbReference type="IntAct" id="P28700">
    <property type="interactions" value="22"/>
</dbReference>
<dbReference type="MINT" id="P28700"/>
<dbReference type="STRING" id="10090.ENSMUSP00000076491"/>
<dbReference type="BindingDB" id="P28700"/>
<dbReference type="ChEMBL" id="CHEMBL3084"/>
<dbReference type="DrugCentral" id="P28700"/>
<dbReference type="GuidetoPHARMACOLOGY" id="610"/>
<dbReference type="GlyGen" id="P28700">
    <property type="glycosylation" value="1 site, 1 O-linked glycan (1 site)"/>
</dbReference>
<dbReference type="iPTMnet" id="P28700"/>
<dbReference type="PhosphoSitePlus" id="P28700"/>
<dbReference type="PaxDb" id="10090-ENSMUSP00000076491"/>
<dbReference type="ProteomicsDB" id="260961"/>
<dbReference type="Pumba" id="P28700"/>
<dbReference type="Antibodypedia" id="3881">
    <property type="antibodies" value="421 antibodies from 41 providers"/>
</dbReference>
<dbReference type="DNASU" id="20181"/>
<dbReference type="Ensembl" id="ENSMUST00000077257.12">
    <property type="protein sequence ID" value="ENSMUSP00000076491.6"/>
    <property type="gene ID" value="ENSMUSG00000015846.17"/>
</dbReference>
<dbReference type="GeneID" id="20181"/>
<dbReference type="KEGG" id="mmu:20181"/>
<dbReference type="UCSC" id="uc008ixs.1">
    <property type="organism name" value="mouse"/>
</dbReference>
<dbReference type="AGR" id="MGI:98214"/>
<dbReference type="CTD" id="6256"/>
<dbReference type="MGI" id="MGI:98214">
    <property type="gene designation" value="Rxra"/>
</dbReference>
<dbReference type="VEuPathDB" id="HostDB:ENSMUSG00000015846"/>
<dbReference type="eggNOG" id="KOG3575">
    <property type="taxonomic scope" value="Eukaryota"/>
</dbReference>
<dbReference type="GeneTree" id="ENSGT00940000159789"/>
<dbReference type="InParanoid" id="P28700"/>
<dbReference type="OMA" id="ILLRAXF"/>
<dbReference type="OrthoDB" id="35623at9989"/>
<dbReference type="PhylomeDB" id="P28700"/>
<dbReference type="TreeFam" id="TF352097"/>
<dbReference type="Reactome" id="R-MMU-159418">
    <property type="pathway name" value="Recycling of bile acids and salts"/>
</dbReference>
<dbReference type="Reactome" id="R-MMU-192105">
    <property type="pathway name" value="Synthesis of bile acids and bile salts"/>
</dbReference>
<dbReference type="Reactome" id="R-MMU-193368">
    <property type="pathway name" value="Synthesis of bile acids and bile salts via 7alpha-hydroxycholesterol"/>
</dbReference>
<dbReference type="Reactome" id="R-MMU-193807">
    <property type="pathway name" value="Synthesis of bile acids and bile salts via 27-hydroxycholesterol"/>
</dbReference>
<dbReference type="Reactome" id="R-MMU-200425">
    <property type="pathway name" value="Carnitine shuttle"/>
</dbReference>
<dbReference type="Reactome" id="R-MMU-211976">
    <property type="pathway name" value="Endogenous sterols"/>
</dbReference>
<dbReference type="Reactome" id="R-MMU-381340">
    <property type="pathway name" value="Transcriptional regulation of white adipocyte differentiation"/>
</dbReference>
<dbReference type="Reactome" id="R-MMU-383280">
    <property type="pathway name" value="Nuclear Receptor transcription pathway"/>
</dbReference>
<dbReference type="Reactome" id="R-MMU-400206">
    <property type="pathway name" value="Regulation of lipid metabolism by PPARalpha"/>
</dbReference>
<dbReference type="Reactome" id="R-MMU-4090294">
    <property type="pathway name" value="SUMOylation of intracellular receptors"/>
</dbReference>
<dbReference type="Reactome" id="R-MMU-5362517">
    <property type="pathway name" value="Signaling by Retinoic Acid"/>
</dbReference>
<dbReference type="Reactome" id="R-MMU-9029569">
    <property type="pathway name" value="NR1H3 &amp; NR1H2 regulate gene expression linked to cholesterol transport and efflux"/>
</dbReference>
<dbReference type="Reactome" id="R-MMU-9616222">
    <property type="pathway name" value="Transcriptional regulation of granulopoiesis"/>
</dbReference>
<dbReference type="Reactome" id="R-MMU-9623433">
    <property type="pathway name" value="NR1H2 &amp; NR1H3 regulate gene expression to control bile acid homeostasis"/>
</dbReference>
<dbReference type="Reactome" id="R-MMU-9707564">
    <property type="pathway name" value="Cytoprotection by HMOX1"/>
</dbReference>
<dbReference type="Reactome" id="R-MMU-9841922">
    <property type="pathway name" value="MLL4 and MLL3 complexes regulate expression of PPARG target genes in adipogenesis and hepatic steatosis"/>
</dbReference>
<dbReference type="BioGRID-ORCS" id="20181">
    <property type="hits" value="4 hits in 83 CRISPR screens"/>
</dbReference>
<dbReference type="ChiTaRS" id="Rxra">
    <property type="organism name" value="mouse"/>
</dbReference>
<dbReference type="EvolutionaryTrace" id="P28700"/>
<dbReference type="PRO" id="PR:P28700"/>
<dbReference type="Proteomes" id="UP000000589">
    <property type="component" value="Chromosome 2"/>
</dbReference>
<dbReference type="RNAct" id="P28700">
    <property type="molecule type" value="protein"/>
</dbReference>
<dbReference type="Bgee" id="ENSMUSG00000015846">
    <property type="expression patterns" value="Expressed in lip and 262 other cell types or tissues"/>
</dbReference>
<dbReference type="ExpressionAtlas" id="P28700">
    <property type="expression patterns" value="baseline and differential"/>
</dbReference>
<dbReference type="GO" id="GO:0005739">
    <property type="term" value="C:mitochondrion"/>
    <property type="evidence" value="ECO:0007669"/>
    <property type="project" value="UniProtKB-SubCell"/>
</dbReference>
<dbReference type="GO" id="GO:0005654">
    <property type="term" value="C:nucleoplasm"/>
    <property type="evidence" value="ECO:0000304"/>
    <property type="project" value="Reactome"/>
</dbReference>
<dbReference type="GO" id="GO:0005634">
    <property type="term" value="C:nucleus"/>
    <property type="evidence" value="ECO:0000314"/>
    <property type="project" value="MGI"/>
</dbReference>
<dbReference type="GO" id="GO:0090575">
    <property type="term" value="C:RNA polymerase II transcription regulator complex"/>
    <property type="evidence" value="ECO:0000314"/>
    <property type="project" value="BHF-UCL"/>
</dbReference>
<dbReference type="GO" id="GO:0005667">
    <property type="term" value="C:transcription regulator complex"/>
    <property type="evidence" value="ECO:0000353"/>
    <property type="project" value="ComplexPortal"/>
</dbReference>
<dbReference type="GO" id="GO:0031490">
    <property type="term" value="F:chromatin DNA binding"/>
    <property type="evidence" value="ECO:0000314"/>
    <property type="project" value="MGI"/>
</dbReference>
<dbReference type="GO" id="GO:0003677">
    <property type="term" value="F:DNA binding"/>
    <property type="evidence" value="ECO:0000314"/>
    <property type="project" value="MGI"/>
</dbReference>
<dbReference type="GO" id="GO:0003700">
    <property type="term" value="F:DNA-binding transcription factor activity"/>
    <property type="evidence" value="ECO:0000316"/>
    <property type="project" value="MGI"/>
</dbReference>
<dbReference type="GO" id="GO:0042802">
    <property type="term" value="F:identical protein binding"/>
    <property type="evidence" value="ECO:0000266"/>
    <property type="project" value="MGI"/>
</dbReference>
<dbReference type="GO" id="GO:0004879">
    <property type="term" value="F:nuclear receptor activity"/>
    <property type="evidence" value="ECO:0000314"/>
    <property type="project" value="MGI"/>
</dbReference>
<dbReference type="GO" id="GO:0003707">
    <property type="term" value="F:nuclear steroid receptor activity"/>
    <property type="evidence" value="ECO:0007669"/>
    <property type="project" value="InterPro"/>
</dbReference>
<dbReference type="GO" id="GO:0000978">
    <property type="term" value="F:RNA polymerase II cis-regulatory region sequence-specific DNA binding"/>
    <property type="evidence" value="ECO:0000314"/>
    <property type="project" value="MGI"/>
</dbReference>
<dbReference type="GO" id="GO:0001162">
    <property type="term" value="F:RNA polymerase II intronic transcription regulatory region sequence-specific DNA binding"/>
    <property type="evidence" value="ECO:0000314"/>
    <property type="project" value="MGI"/>
</dbReference>
<dbReference type="GO" id="GO:0000977">
    <property type="term" value="F:RNA polymerase II transcription regulatory region sequence-specific DNA binding"/>
    <property type="evidence" value="ECO:0000266"/>
    <property type="project" value="MGI"/>
</dbReference>
<dbReference type="GO" id="GO:0043565">
    <property type="term" value="F:sequence-specific DNA binding"/>
    <property type="evidence" value="ECO:0000316"/>
    <property type="project" value="MGI"/>
</dbReference>
<dbReference type="GO" id="GO:0001223">
    <property type="term" value="F:transcription coactivator binding"/>
    <property type="evidence" value="ECO:0000353"/>
    <property type="project" value="UniProtKB"/>
</dbReference>
<dbReference type="GO" id="GO:0008270">
    <property type="term" value="F:zinc ion binding"/>
    <property type="evidence" value="ECO:0007669"/>
    <property type="project" value="UniProtKB-KW"/>
</dbReference>
<dbReference type="GO" id="GO:0060978">
    <property type="term" value="P:angiogenesis involved in coronary vascular morphogenesis"/>
    <property type="evidence" value="ECO:0000304"/>
    <property type="project" value="DFLAT"/>
</dbReference>
<dbReference type="GO" id="GO:0043010">
    <property type="term" value="P:camera-type eye development"/>
    <property type="evidence" value="ECO:0000316"/>
    <property type="project" value="MGI"/>
</dbReference>
<dbReference type="GO" id="GO:0055007">
    <property type="term" value="P:cardiac muscle cell differentiation"/>
    <property type="evidence" value="ECO:0000304"/>
    <property type="project" value="DFLAT"/>
</dbReference>
<dbReference type="GO" id="GO:0060038">
    <property type="term" value="P:cardiac muscle cell proliferation"/>
    <property type="evidence" value="ECO:0000315"/>
    <property type="project" value="MGI"/>
</dbReference>
<dbReference type="GO" id="GO:0007566">
    <property type="term" value="P:embryo implantation"/>
    <property type="evidence" value="ECO:0000316"/>
    <property type="project" value="MGI"/>
</dbReference>
<dbReference type="GO" id="GO:0010467">
    <property type="term" value="P:gene expression"/>
    <property type="evidence" value="ECO:0000315"/>
    <property type="project" value="MGI"/>
</dbReference>
<dbReference type="GO" id="GO:0007507">
    <property type="term" value="P:heart development"/>
    <property type="evidence" value="ECO:0000315"/>
    <property type="project" value="MGI"/>
</dbReference>
<dbReference type="GO" id="GO:0003007">
    <property type="term" value="P:heart morphogenesis"/>
    <property type="evidence" value="ECO:0000304"/>
    <property type="project" value="DFLAT"/>
</dbReference>
<dbReference type="GO" id="GO:0009755">
    <property type="term" value="P:hormone-mediated signaling pathway"/>
    <property type="evidence" value="ECO:0000266"/>
    <property type="project" value="ComplexPortal"/>
</dbReference>
<dbReference type="GO" id="GO:0001701">
    <property type="term" value="P:in utero embryonic development"/>
    <property type="evidence" value="ECO:0000316"/>
    <property type="project" value="MGI"/>
</dbReference>
<dbReference type="GO" id="GO:0001893">
    <property type="term" value="P:maternal placenta development"/>
    <property type="evidence" value="ECO:0000316"/>
    <property type="project" value="MGI"/>
</dbReference>
<dbReference type="GO" id="GO:0060485">
    <property type="term" value="P:mesenchyme development"/>
    <property type="evidence" value="ECO:0000304"/>
    <property type="project" value="DFLAT"/>
</dbReference>
<dbReference type="GO" id="GO:0042789">
    <property type="term" value="P:mRNA transcription by RNA polymerase II"/>
    <property type="evidence" value="ECO:0000314"/>
    <property type="project" value="ComplexPortal"/>
</dbReference>
<dbReference type="GO" id="GO:0010629">
    <property type="term" value="P:negative regulation of gene expression"/>
    <property type="evidence" value="ECO:0000304"/>
    <property type="project" value="DFLAT"/>
</dbReference>
<dbReference type="GO" id="GO:0000122">
    <property type="term" value="P:negative regulation of transcription by RNA polymerase II"/>
    <property type="evidence" value="ECO:0000316"/>
    <property type="project" value="MGI"/>
</dbReference>
<dbReference type="GO" id="GO:0001890">
    <property type="term" value="P:placenta development"/>
    <property type="evidence" value="ECO:0000315"/>
    <property type="project" value="MGI"/>
</dbReference>
<dbReference type="GO" id="GO:0030501">
    <property type="term" value="P:positive regulation of bone mineralization"/>
    <property type="evidence" value="ECO:0000303"/>
    <property type="project" value="ComplexPortal"/>
</dbReference>
<dbReference type="GO" id="GO:0045893">
    <property type="term" value="P:positive regulation of DNA-templated transcription"/>
    <property type="evidence" value="ECO:0000316"/>
    <property type="project" value="MGI"/>
</dbReference>
<dbReference type="GO" id="GO:0002157">
    <property type="term" value="P:positive regulation of thyroid hormone receptor signaling pathway"/>
    <property type="evidence" value="ECO:0000314"/>
    <property type="project" value="ComplexPortal"/>
</dbReference>
<dbReference type="GO" id="GO:0045944">
    <property type="term" value="P:positive regulation of transcription by RNA polymerase II"/>
    <property type="evidence" value="ECO:0000314"/>
    <property type="project" value="BHF-UCL"/>
</dbReference>
<dbReference type="GO" id="GO:0045994">
    <property type="term" value="P:positive regulation of translational initiation by iron"/>
    <property type="evidence" value="ECO:0000316"/>
    <property type="project" value="MGI"/>
</dbReference>
<dbReference type="GO" id="GO:0070564">
    <property type="term" value="P:positive regulation of vitamin D receptor signaling pathway"/>
    <property type="evidence" value="ECO:0000266"/>
    <property type="project" value="ComplexPortal"/>
</dbReference>
<dbReference type="GO" id="GO:0060687">
    <property type="term" value="P:regulation of branching involved in prostate gland morphogenesis"/>
    <property type="evidence" value="ECO:0000315"/>
    <property type="project" value="MGI"/>
</dbReference>
<dbReference type="GO" id="GO:0006355">
    <property type="term" value="P:regulation of DNA-templated transcription"/>
    <property type="evidence" value="ECO:0000314"/>
    <property type="project" value="MGI"/>
</dbReference>
<dbReference type="GO" id="GO:0006357">
    <property type="term" value="P:regulation of transcription by RNA polymerase II"/>
    <property type="evidence" value="ECO:0000316"/>
    <property type="project" value="MGI"/>
</dbReference>
<dbReference type="GO" id="GO:0048384">
    <property type="term" value="P:retinoic acid receptor signaling pathway"/>
    <property type="evidence" value="ECO:0000314"/>
    <property type="project" value="ComplexPortal"/>
</dbReference>
<dbReference type="GO" id="GO:0060528">
    <property type="term" value="P:secretory columnal luminar epithelial cell differentiation involved in prostate glandular acinus development"/>
    <property type="evidence" value="ECO:0000315"/>
    <property type="project" value="MGI"/>
</dbReference>
<dbReference type="GO" id="GO:0055012">
    <property type="term" value="P:ventricular cardiac muscle cell differentiation"/>
    <property type="evidence" value="ECO:0000315"/>
    <property type="project" value="MGI"/>
</dbReference>
<dbReference type="GO" id="GO:0055010">
    <property type="term" value="P:ventricular cardiac muscle tissue morphogenesis"/>
    <property type="evidence" value="ECO:0000315"/>
    <property type="project" value="MGI"/>
</dbReference>
<dbReference type="GO" id="GO:0061032">
    <property type="term" value="P:visceral serous pericardium development"/>
    <property type="evidence" value="ECO:0000304"/>
    <property type="project" value="DFLAT"/>
</dbReference>
<dbReference type="CDD" id="cd06956">
    <property type="entry name" value="NR_DBD_RXR"/>
    <property type="match status" value="1"/>
</dbReference>
<dbReference type="CDD" id="cd06943">
    <property type="entry name" value="NR_LBD_RXR_like"/>
    <property type="match status" value="1"/>
</dbReference>
<dbReference type="FunFam" id="1.10.565.10:FF:000002">
    <property type="entry name" value="Retinoic acid receptor RXR-alpha"/>
    <property type="match status" value="1"/>
</dbReference>
<dbReference type="FunFam" id="3.30.50.10:FF:000005">
    <property type="entry name" value="Retinoic acid receptor RXR-alpha"/>
    <property type="match status" value="1"/>
</dbReference>
<dbReference type="Gene3D" id="3.30.50.10">
    <property type="entry name" value="Erythroid Transcription Factor GATA-1, subunit A"/>
    <property type="match status" value="1"/>
</dbReference>
<dbReference type="Gene3D" id="1.10.565.10">
    <property type="entry name" value="Retinoid X Receptor"/>
    <property type="match status" value="1"/>
</dbReference>
<dbReference type="InterPro" id="IPR035500">
    <property type="entry name" value="NHR-like_dom_sf"/>
</dbReference>
<dbReference type="InterPro" id="IPR021780">
    <property type="entry name" value="Nuc_recep-AF1"/>
</dbReference>
<dbReference type="InterPro" id="IPR000536">
    <property type="entry name" value="Nucl_hrmn_rcpt_lig-bd"/>
</dbReference>
<dbReference type="InterPro" id="IPR050274">
    <property type="entry name" value="Nuclear_hormone_rcpt_NR2"/>
</dbReference>
<dbReference type="InterPro" id="IPR001723">
    <property type="entry name" value="Nuclear_hrmn_rcpt"/>
</dbReference>
<dbReference type="InterPro" id="IPR000003">
    <property type="entry name" value="Retinoid-X_rcpt/HNF4"/>
</dbReference>
<dbReference type="InterPro" id="IPR001628">
    <property type="entry name" value="Znf_hrmn_rcpt"/>
</dbReference>
<dbReference type="InterPro" id="IPR013088">
    <property type="entry name" value="Znf_NHR/GATA"/>
</dbReference>
<dbReference type="PANTHER" id="PTHR24083">
    <property type="entry name" value="NUCLEAR HORMONE RECEPTOR"/>
    <property type="match status" value="1"/>
</dbReference>
<dbReference type="Pfam" id="PF00104">
    <property type="entry name" value="Hormone_recep"/>
    <property type="match status" value="1"/>
</dbReference>
<dbReference type="Pfam" id="PF11825">
    <property type="entry name" value="Nuc_recep-AF1"/>
    <property type="match status" value="1"/>
</dbReference>
<dbReference type="Pfam" id="PF00105">
    <property type="entry name" value="zf-C4"/>
    <property type="match status" value="1"/>
</dbReference>
<dbReference type="PRINTS" id="PR00545">
    <property type="entry name" value="RETINOIDXR"/>
</dbReference>
<dbReference type="PRINTS" id="PR00398">
    <property type="entry name" value="STRDHORMONER"/>
</dbReference>
<dbReference type="PRINTS" id="PR00047">
    <property type="entry name" value="STROIDFINGER"/>
</dbReference>
<dbReference type="SMART" id="SM00430">
    <property type="entry name" value="HOLI"/>
    <property type="match status" value="1"/>
</dbReference>
<dbReference type="SMART" id="SM00399">
    <property type="entry name" value="ZnF_C4"/>
    <property type="match status" value="1"/>
</dbReference>
<dbReference type="SUPFAM" id="SSF57716">
    <property type="entry name" value="Glucocorticoid receptor-like (DNA-binding domain)"/>
    <property type="match status" value="1"/>
</dbReference>
<dbReference type="SUPFAM" id="SSF48508">
    <property type="entry name" value="Nuclear receptor ligand-binding domain"/>
    <property type="match status" value="1"/>
</dbReference>
<dbReference type="PROSITE" id="PS51843">
    <property type="entry name" value="NR_LBD"/>
    <property type="match status" value="1"/>
</dbReference>
<dbReference type="PROSITE" id="PS00031">
    <property type="entry name" value="NUCLEAR_REC_DBD_1"/>
    <property type="match status" value="1"/>
</dbReference>
<dbReference type="PROSITE" id="PS51030">
    <property type="entry name" value="NUCLEAR_REC_DBD_2"/>
    <property type="match status" value="1"/>
</dbReference>
<evidence type="ECO:0000250" key="1"/>
<evidence type="ECO:0000250" key="2">
    <source>
        <dbReference type="UniProtKB" id="P19793"/>
    </source>
</evidence>
<evidence type="ECO:0000255" key="3">
    <source>
        <dbReference type="PROSITE-ProRule" id="PRU00407"/>
    </source>
</evidence>
<evidence type="ECO:0000255" key="4">
    <source>
        <dbReference type="PROSITE-ProRule" id="PRU01189"/>
    </source>
</evidence>
<evidence type="ECO:0000256" key="5">
    <source>
        <dbReference type="SAM" id="MobiDB-lite"/>
    </source>
</evidence>
<evidence type="ECO:0000269" key="6">
    <source>
    </source>
</evidence>
<evidence type="ECO:0000269" key="7">
    <source>
    </source>
</evidence>
<evidence type="ECO:0000269" key="8">
    <source>
    </source>
</evidence>
<evidence type="ECO:0000269" key="9">
    <source>
    </source>
</evidence>
<evidence type="ECO:0000269" key="10">
    <source>
    </source>
</evidence>
<evidence type="ECO:0000269" key="11">
    <source>
    </source>
</evidence>
<evidence type="ECO:0000269" key="12">
    <source>
    </source>
</evidence>
<evidence type="ECO:0000269" key="13">
    <source>
    </source>
</evidence>
<evidence type="ECO:0000269" key="14">
    <source>
    </source>
</evidence>
<evidence type="ECO:0000269" key="15">
    <source>
    </source>
</evidence>
<evidence type="ECO:0000269" key="16">
    <source>
    </source>
</evidence>
<evidence type="ECO:0000269" key="17">
    <source>
    </source>
</evidence>
<evidence type="ECO:0000305" key="18"/>
<evidence type="ECO:0007744" key="19">
    <source>
        <dbReference type="PDB" id="1XDK"/>
    </source>
</evidence>
<evidence type="ECO:0007744" key="20">
    <source>
        <dbReference type="PDB" id="3A9E"/>
    </source>
</evidence>
<evidence type="ECO:0007744" key="21">
    <source>
    </source>
</evidence>
<evidence type="ECO:0007829" key="22">
    <source>
        <dbReference type="PDB" id="1DKF"/>
    </source>
</evidence>
<evidence type="ECO:0007829" key="23">
    <source>
        <dbReference type="PDB" id="3A9E"/>
    </source>
</evidence>
<evidence type="ECO:0007829" key="24">
    <source>
        <dbReference type="PDB" id="7PDQ"/>
    </source>
</evidence>
<evidence type="ECO:0007829" key="25">
    <source>
        <dbReference type="PDB" id="8J54"/>
    </source>
</evidence>
<comment type="function">
    <text evidence="2 6 9 10 15 16">Receptor for retinoic acid that acts as a transcription factor (PubMed:10383391, PubMed:12032153, PubMed:25417649). Forms homo- or heterodimers with retinoic acid receptors (RARs) and binds to target response elements in response to their ligands, all-trans or 9-cis retinoic acid, to regulate gene expression in various biological processes (PubMed:10383391, PubMed:1310259). The RAR/RXR heterodimers bind to the retinoic acid response elements (RARE) composed of tandem 5'-AGGTCA-3' sites known as DR1-DR5 to regulate transcription (PubMed:1310259). The high affinity ligand for retinoid X receptors (RXRs) is 9-cis retinoic acid (PubMed:10383391, PubMed:25417649). In the absence of ligand, the RXR-RAR heterodimers associate with a multiprotein complex containing transcription corepressors that induce histone deacetylation, chromatin condensation and transcriptional suppression (By similarity). On ligand binding, the corepressors dissociate from the receptors and coactivators are recruited leading to transcriptional activation (By similarity). Serves as a common heterodimeric partner for a number of nuclear receptors, such as RARA, RARB and PPARA (PubMed:1310259). The RXRA/RARB heterodimer can act as a transcriptional repressor or transcriptional activator, depending on the RARE DNA element context (By similarity). The RXRA/PPARA heterodimer is required for PPARA transcriptional activity on fatty acid oxidation genes such as ACOX1 and the P450 system genes (By similarity). Together with RARA, positively regulates microRNA-10a expression, thereby inhibiting the GATA6/VCAM1 signaling response to pulsatile shear stress in vascular endothelial cells (By similarity). Acts as an enhancer of RARA binding to RARE DNA element (By similarity). May facilitate the nuclear import of heterodimerization partners such as VDR and NR4A1 (By similarity). Promotes myelin debris phagocytosis and remyelination by macrophages (PubMed:26463675). Plays a role in the attenuation of the innate immune system in response to viral infections, possibly by negatively regulating the transcription of antiviral genes such as type I IFN genes (PubMed:25417649). Involved in the regulation of calcium signaling by repressing ITPR2 gene expression, thereby controlling cellular senescence (By similarity).</text>
</comment>
<comment type="subunit">
    <text evidence="2 7 8 11 12 13 14 17">Homodimer (By similarity). Heterodimer with RARA; required for ligand-dependent retinoic acid receptor transcriptional activity (PubMed:10882070). Heterodimer with PPARA (via the leucine-like zipper in the LBD); the interaction is required for PPARA transcriptional activity (By similarity). Heterodimerizes with PPARG (PubMed:7838715). Heterodimerizes (via NR LBD) with RARB (By similarity). Heterodimerizes with NR1H4; the heterodimerization enhances the binding affinity for LXXLL motifs from coactivators (By similarity). Interacts with coactivator NCO6 (PubMed:10788465). Interacts with coactivator NCO3 (By similarity). Interacts with coactivator FAM120B (PubMed:17595322). Interacts with coactivator PELP1, SENP6, SFPQ, DNTTIP2 and RNF8 (By similarity). Interacts with PRMT2 (By similarity). Interacts with ASXL1 (PubMed:16606617). Interacts with BHLHE40/DEC1, BHLHE41/DEC2, NCOR1 and NCOR2 (By similarity). Interacts in a ligand-dependent fashion with MED1 and NCOA1 (PubMed:15528208, PubMed:16606617). Interacts with VDR (By similarity). Interacts with EP300; the interaction is decreased by 9-cis retinoic acid (By similarity). Heterodimer (via C-terminus) with NR4A1 (via DNA-binding domain); the interaction is enhanced by 9-cis retinoic acid (By similarity). NR4A1 competes with EP300 for interaction with RXRA and thereby attenuates EP300 mediated acetylation of RXRA (By similarity). In the absence of hormonal ligand, interacts with TACC1 (PubMed:20078863). Interacts ith IGFBP3 (By similarity).</text>
</comment>
<comment type="interaction">
    <interactant intactId="EBI-346715">
        <id>P28700</id>
    </interactant>
    <interactant intactId="EBI-5743705">
        <id>P59598</id>
        <label>Asxl1</label>
    </interactant>
    <organismsDiffer>false</organismsDiffer>
    <experiments>2</experiments>
</comment>
<comment type="interaction">
    <interactant intactId="EBI-346715">
        <id>P28700</id>
    </interactant>
    <interactant intactId="EBI-645025">
        <id>Q64337</id>
        <label>Sqstm1</label>
    </interactant>
    <organismsDiffer>false</organismsDiffer>
    <experiments>3</experiments>
</comment>
<comment type="interaction">
    <interactant intactId="EBI-346715">
        <id>P28700</id>
    </interactant>
    <interactant intactId="EBI-1646500">
        <id>Q8IXJ9</id>
        <label>ASXL1</label>
    </interactant>
    <organismsDiffer>true</organismsDiffer>
    <experiments>2</experiments>
</comment>
<comment type="interaction">
    <interactant intactId="EBI-346715">
        <id>P28700</id>
    </interactant>
    <interactant intactId="EBI-394558">
        <id>Q71SY5</id>
        <label>MED25</label>
    </interactant>
    <organismsDiffer>true</organismsDiffer>
    <experiments>3</experiments>
</comment>
<comment type="interaction">
    <interactant intactId="EBI-346715">
        <id>P28700</id>
    </interactant>
    <interactant intactId="EBI-355463">
        <id>P23246-1</id>
        <label>SFPQ</label>
    </interactant>
    <organismsDiffer>true</organismsDiffer>
    <experiments>3</experiments>
</comment>
<comment type="interaction">
    <interactant intactId="EBI-346715">
        <id>P28700</id>
    </interactant>
    <interactant intactId="EBI-307104">
        <id>Q13501</id>
        <label>SQSTM1</label>
    </interactant>
    <organismsDiffer>true</organismsDiffer>
    <experiments>3</experiments>
</comment>
<comment type="interaction">
    <interactant intactId="EBI-346715">
        <id>P28700</id>
    </interactant>
    <interactant intactId="EBI-286357">
        <id>P11473</id>
        <label>VDR</label>
    </interactant>
    <organismsDiffer>true</organismsDiffer>
    <experiments>3</experiments>
</comment>
<comment type="subcellular location">
    <subcellularLocation>
        <location evidence="16">Nucleus</location>
    </subcellularLocation>
    <subcellularLocation>
        <location evidence="2">Cytoplasm</location>
    </subcellularLocation>
    <subcellularLocation>
        <location evidence="2">Mitochondrion</location>
    </subcellularLocation>
    <text evidence="2">Localization to the nucleus is enhanced by vitamin D3 (By similarity). Nuclear localization may be enhanced by the interaction with heterodimerization partner VDR (By similarity). Translocation to the mitochondrion upon interaction with NR4A1 (By similarity). Increased nuclear localization upon pulsatile shear stress (By similarity).</text>
</comment>
<comment type="tissue specificity">
    <text evidence="15 16">Expressed in macrophages (at protein level).</text>
</comment>
<comment type="induction">
    <text evidence="15 16">Down-regulated by infection with viruses, such as VSV, HSV-1 and MHV68 (PubMed:25417649). Down-regulated by aging (PubMed:26463675).</text>
</comment>
<comment type="domain">
    <text>Composed of three domains: a modulating N-terminal or AF1 domain, a DNA-binding domain and a C-terminal ligand-binding or AF2 domain.</text>
</comment>
<comment type="PTM">
    <text evidence="2">Acetylated by EP300; acetylation enhances DNA binding and transcriptional activity.</text>
</comment>
<comment type="PTM">
    <text evidence="1 2 6 9">Phosphorylated on serine and threonine residues mainly in the N-terminal modulating domain (PubMed:10383391, PubMed:12032153). Constitutively phosphorylated on Ser-22 in the presence or absence of ligand (PubMed:10383391, PubMed:12032153). Under stress conditions, hyperphosphorylated by activated JNK on Ser-61, Ser-75, Thr-87 and Ser-265 (PubMed:10383391). Phosphorylated on Ser-28, in vitro, by PKA (By similarity). This phosphorylation is required for repression of cAMP-mediated transcriptional activity of RARA (By similarity).</text>
</comment>
<comment type="PTM">
    <text evidence="2">Ubiquitinated by UBR5, leading to its degradation: UBR5 specifically recognizes and binds ligand-bound RXRA when it is not associated with coactivators (NCOAs). In presence of NCOAs, the UBR5-degron is not accessible, preventing its ubiquitination and degradation.</text>
</comment>
<comment type="PTM">
    <text evidence="2">Sumoylation negatively regulates transcriptional activity. Desumoylated specifically by SENP6.</text>
</comment>
<comment type="disruption phenotype">
    <text evidence="16">Reduced myelin debris uptake by bone marrow-derived macrophages (PubMed:26463675). Conditional knockout in myeloid cells results in reduced myelin debris clearing by macrophages, delayed oligodendrocyte progenitor cell differentiation and slowern remyelination after induced focal demyelination (PubMed:26463675).</text>
</comment>
<comment type="similarity">
    <text evidence="18">Belongs to the nuclear hormone receptor family. NR2 subfamily.</text>
</comment>
<organism>
    <name type="scientific">Mus musculus</name>
    <name type="common">Mouse</name>
    <dbReference type="NCBI Taxonomy" id="10090"/>
    <lineage>
        <taxon>Eukaryota</taxon>
        <taxon>Metazoa</taxon>
        <taxon>Chordata</taxon>
        <taxon>Craniata</taxon>
        <taxon>Vertebrata</taxon>
        <taxon>Euteleostomi</taxon>
        <taxon>Mammalia</taxon>
        <taxon>Eutheria</taxon>
        <taxon>Euarchontoglires</taxon>
        <taxon>Glires</taxon>
        <taxon>Rodentia</taxon>
        <taxon>Myomorpha</taxon>
        <taxon>Muroidea</taxon>
        <taxon>Muridae</taxon>
        <taxon>Murinae</taxon>
        <taxon>Mus</taxon>
        <taxon>Mus</taxon>
    </lineage>
</organism>
<protein>
    <recommendedName>
        <fullName>Retinoic acid receptor RXR-alpha</fullName>
    </recommendedName>
    <alternativeName>
        <fullName>Nuclear receptor subfamily 2 group B member 1</fullName>
    </alternativeName>
    <alternativeName>
        <fullName>Retinoid X receptor alpha</fullName>
    </alternativeName>
</protein>
<reference key="1">
    <citation type="journal article" date="1992" name="Cell">
        <title>Purification, cloning, and RXR identity of the HeLa cell factor with which RAR or TR heterodimerizes to bind target sequences efficiently.</title>
        <authorList>
            <person name="Leid M."/>
            <person name="Kastner P."/>
            <person name="Lyons R."/>
            <person name="Nakshatri H."/>
            <person name="Saunders M."/>
            <person name="Zacharewsi T."/>
            <person name="Chen J.Y."/>
            <person name="Staub A."/>
            <person name="Garnier J.-M."/>
            <person name="Mader S."/>
            <person name="Chambon P."/>
        </authorList>
    </citation>
    <scope>NUCLEOTIDE SEQUENCE [MRNA]</scope>
    <scope>HETERODIMERIZATION WITH RARA</scope>
    <scope>FUNCTION</scope>
</reference>
<reference key="2">
    <citation type="journal article" date="1992" name="Genes Dev.">
        <title>Characterization of three RXR genes that mediate the action of 9-cis retinoic acid.</title>
        <authorList>
            <person name="Mangelsdorf D.J."/>
            <person name="Borgmeyer U."/>
            <person name="Heyman R.A."/>
            <person name="Zhou J.Y."/>
            <person name="Ong E.S."/>
            <person name="Oro A.E."/>
            <person name="Kakizuka A."/>
            <person name="Evans R.M."/>
        </authorList>
    </citation>
    <scope>NUCLEOTIDE SEQUENCE [MRNA]</scope>
    <scope>IDENTIFICATION OF LIGAND</scope>
</reference>
<reference key="3">
    <citation type="journal article" date="1994" name="Nucleic Acids Res.">
        <title>Adipocyte-specific transcription factor ARF6 is a heterodimeric complex of two nuclear hormone receptors, PPAR gamma and RXR alpha.</title>
        <authorList>
            <person name="Tontonoz P."/>
            <person name="Graves R.A."/>
            <person name="Budavari A.I."/>
            <person name="Erdjument-Bromage H."/>
            <person name="Lui M."/>
            <person name="Hu E."/>
            <person name="Tempst P."/>
            <person name="Spiegelman B.M."/>
        </authorList>
    </citation>
    <scope>PROTEIN SEQUENCE OF 5-16; 27-46; 291-307 AND 446-465</scope>
    <scope>SUBUNIT</scope>
    <source>
        <tissue>Adipose tissue</tissue>
    </source>
</reference>
<reference key="4">
    <citation type="journal article" date="1999" name="J. Biol. Chem.">
        <title>Hyperphosphorylation of the retinoid X receptor alpha by activated c-Jun NH2-terminal kinases.</title>
        <authorList>
            <person name="Adam-Stitah S."/>
            <person name="Penna L."/>
            <person name="Chambon P."/>
            <person name="Rochette-Egly C."/>
        </authorList>
    </citation>
    <scope>FUNCTION</scope>
    <scope>PHOSPHORYLATION AT SER-22; SER-61; SER-75; THR-87 AND SER-265</scope>
    <scope>MUTAGENESIS OF SER-22; SER-44; SER-48; SER-54; SER-61; SER-75; THR-87; SER-96; SER-101 AND SER-265</scope>
</reference>
<reference key="5">
    <citation type="journal article" date="2000" name="J. Biol. Chem.">
        <title>Isolation and characterization of peroxisome proliferator-activated receptor (PPAR) interacting protein (PRIP) as a coactivator for PPAR.</title>
        <authorList>
            <person name="Zhu Y.-J."/>
            <person name="Kan L."/>
            <person name="Qi C."/>
            <person name="Kanwar Y.S."/>
            <person name="Yeldandi A.V."/>
            <person name="Rao M.S."/>
            <person name="Reddy J.K."/>
        </authorList>
    </citation>
    <scope>INTERACTION WITH NCOA6</scope>
</reference>
<reference key="6">
    <citation type="journal article" date="2002" name="J. Biol. Chem.">
        <title>The phosphorylation site located in the A region of retinoic X receptor alpha is required for the antiproliferative effect of retinoic acid (RA) and the activation of RA target genes in F9 cells.</title>
        <authorList>
            <person name="Bastien J."/>
            <person name="Adam-Stitah S."/>
            <person name="Plassat J.L."/>
            <person name="Chambon P."/>
            <person name="Rochette-Egly C."/>
        </authorList>
    </citation>
    <scope>FUNCTION</scope>
    <scope>PHOSPHORYLATION AT SER-22</scope>
    <scope>MUTAGENESIS OF SER-22</scope>
</reference>
<reference key="7">
    <citation type="journal article" date="2006" name="J. Biol. Chem.">
        <title>Additional sex comb-like 1 (ASXL1), in cooperation with SRC-1, acts as a ligand-dependent coactivator for retinoic acid receptor.</title>
        <authorList>
            <person name="Cho Y.S."/>
            <person name="Kim E.J."/>
            <person name="Park U.H."/>
            <person name="Sin H.S."/>
            <person name="Um S.J."/>
        </authorList>
    </citation>
    <scope>INTERACTION WITH ASXL1 AND NCOA1</scope>
    <scope>MUTAGENESIS OF 455-PHE-LEU-456 AND 459-MET-LEU-460</scope>
</reference>
<reference key="8">
    <citation type="journal article" date="2007" name="Mol. Endocrinol.">
        <title>Constitutive coactivator of peroxisome proliferator-activated receptor (PPARgamma), a novel coactivator of PPARgamma that promotes adipogenesis.</title>
        <authorList>
            <person name="Li D."/>
            <person name="Kang Q."/>
            <person name="Wang D.-M."/>
        </authorList>
    </citation>
    <scope>INTERACTION WITH FAM120B</scope>
</reference>
<reference key="9">
    <citation type="journal article" date="2010" name="BMC Mol. Biol.">
        <title>The transforming acidic coiled coil (TACC1) protein modulates the transcriptional activity of the nuclear receptors TR and RAR.</title>
        <authorList>
            <person name="Guyot R."/>
            <person name="Vincent S."/>
            <person name="Bertin J."/>
            <person name="Samarut J."/>
            <person name="Ravel-Chapuis P."/>
        </authorList>
    </citation>
    <scope>INTERACTION WITH TACC1</scope>
</reference>
<reference key="10">
    <citation type="journal article" date="2010" name="Cell">
        <title>A tissue-specific atlas of mouse protein phosphorylation and expression.</title>
        <authorList>
            <person name="Huttlin E.L."/>
            <person name="Jedrychowski M.P."/>
            <person name="Elias J.E."/>
            <person name="Goswami T."/>
            <person name="Rad R."/>
            <person name="Beausoleil S.A."/>
            <person name="Villen J."/>
            <person name="Haas W."/>
            <person name="Sowa M.E."/>
            <person name="Gygi S.P."/>
        </authorList>
    </citation>
    <scope>PHOSPHORYLATION [LARGE SCALE ANALYSIS] AT SER-22</scope>
    <scope>IDENTIFICATION BY MASS SPECTROMETRY [LARGE SCALE ANALYSIS]</scope>
    <source>
        <tissue>Kidney</tissue>
        <tissue>Liver</tissue>
    </source>
</reference>
<reference key="11">
    <citation type="journal article" date="2000" name="Mol. Cell">
        <title>Crystal structure of a heterodimeric complex of RAR and RXR ligand-binding domains.</title>
        <authorList>
            <person name="Bourguet W."/>
            <person name="Vivat V."/>
            <person name="Wurtz J.M."/>
            <person name="Chambon P."/>
            <person name="Gronemeyer H."/>
            <person name="Moras D."/>
        </authorList>
    </citation>
    <scope>X-RAY CRYSTALLOGRAPHY (2.5 ANGSTROMS) OF 230-462 OF MUTANT ALA-318 IN COMPLEX WITH H.SAPIENS RARA</scope>
</reference>
<reference evidence="19" key="12">
    <citation type="journal article" date="2005" name="J. Biol. Chem.">
        <title>Characterization of the interaction between retinoic acid receptor/retinoid X receptor (RAR/RXR) heterodimers and transcriptional coactivators through structural and fluorescence anisotropy studies.</title>
        <authorList>
            <person name="Pogenberg V."/>
            <person name="Guichou J.F."/>
            <person name="Vivat-Hannah V."/>
            <person name="Kammerer S."/>
            <person name="Perez E."/>
            <person name="Germain P."/>
            <person name="de Lera A.R."/>
            <person name="Gronemeyer H."/>
            <person name="Royer C.A."/>
            <person name="Bourguet W."/>
        </authorList>
    </citation>
    <scope>X-RAY CRYSTALLOGRAPHY (2.9 ANGSTROMS) OF 230-467 IN COMPLEX WITH RARB AND MED1</scope>
</reference>
<reference evidence="20" key="13">
    <citation type="journal article" date="2010" name="PLoS ONE">
        <title>The 'phantom effect' of the rexinoid LG100754: structural and functional insights.</title>
        <authorList>
            <person name="Sato Y."/>
            <person name="Ramalanjaona N."/>
            <person name="Huet T."/>
            <person name="Potier N."/>
            <person name="Osz J."/>
            <person name="Antony P."/>
            <person name="Peluso-Iltis C."/>
            <person name="Poussin-Courmontagne P."/>
            <person name="Ennifar E."/>
            <person name="Mely Y."/>
            <person name="Dejaegere A."/>
            <person name="Moras D."/>
            <person name="Rochel N."/>
        </authorList>
    </citation>
    <scope>X-RAY CRYSTALLOGRAPHY (2.75 ANGSTROMS) OF 228-467 IN COMPLEX WITH HUMAN RARA AND HUMAN NCOA2</scope>
</reference>
<reference key="14">
    <citation type="journal article" date="2014" name="Nat. Commun.">
        <title>Retinoid X receptor alpha attenuates host antiviral response by suppressing type I interferon.</title>
        <authorList>
            <person name="Ma F."/>
            <person name="Liu S.Y."/>
            <person name="Razani B."/>
            <person name="Arora N."/>
            <person name="Li B."/>
            <person name="Kagechika H."/>
            <person name="Tontonoz P."/>
            <person name="Nunez V."/>
            <person name="Ricote M."/>
            <person name="Cheng G."/>
        </authorList>
    </citation>
    <scope>FUNCTION</scope>
    <scope>TISSUE SPECIFICITY</scope>
    <scope>INDUCTION BY VIRAL INFECTION</scope>
</reference>
<reference key="15">
    <citation type="journal article" date="2015" name="Brain">
        <title>Retinoid X receptor activation reverses age-related deficiencies in myelin debris phagocytosis and remyelination.</title>
        <authorList>
            <person name="Natrajan M.S."/>
            <person name="de la Fuente A.G."/>
            <person name="Crawford A.H."/>
            <person name="Linehan E."/>
            <person name="Nunez V."/>
            <person name="Johnson K.R."/>
            <person name="Wu T."/>
            <person name="Fitzgerald D.C."/>
            <person name="Ricote M."/>
            <person name="Bielekova B."/>
            <person name="Franklin R.J."/>
        </authorList>
    </citation>
    <scope>FUNCTION</scope>
    <scope>SUBCELLULAR LOCATION</scope>
    <scope>TISSUE SPECIFICITY</scope>
    <scope>REPRESSION BY AGING</scope>
    <scope>DISRUPTION PHENOTYPE</scope>
</reference>
<keyword id="KW-0002">3D-structure</keyword>
<keyword id="KW-0007">Acetylation</keyword>
<keyword id="KW-0963">Cytoplasm</keyword>
<keyword id="KW-0903">Direct protein sequencing</keyword>
<keyword id="KW-0238">DNA-binding</keyword>
<keyword id="KW-1017">Isopeptide bond</keyword>
<keyword id="KW-0479">Metal-binding</keyword>
<keyword id="KW-0496">Mitochondrion</keyword>
<keyword id="KW-0539">Nucleus</keyword>
<keyword id="KW-0597">Phosphoprotein</keyword>
<keyword id="KW-0675">Receptor</keyword>
<keyword id="KW-1185">Reference proteome</keyword>
<keyword id="KW-0804">Transcription</keyword>
<keyword id="KW-0805">Transcription regulation</keyword>
<keyword id="KW-0832">Ubl conjugation</keyword>
<keyword id="KW-0862">Zinc</keyword>
<keyword id="KW-0863">Zinc-finger</keyword>
<feature type="chain" id="PRO_0000053567" description="Retinoic acid receptor RXR-alpha">
    <location>
        <begin position="1"/>
        <end position="467"/>
    </location>
</feature>
<feature type="domain" description="NR LBD" evidence="4">
    <location>
        <begin position="232"/>
        <end position="463"/>
    </location>
</feature>
<feature type="DNA-binding region" description="Nuclear receptor" evidence="3">
    <location>
        <begin position="140"/>
        <end position="205"/>
    </location>
</feature>
<feature type="zinc finger region" description="NR C4-type" evidence="3">
    <location>
        <begin position="140"/>
        <end position="160"/>
    </location>
</feature>
<feature type="zinc finger region" description="NR C4-type" evidence="3">
    <location>
        <begin position="176"/>
        <end position="200"/>
    </location>
</feature>
<feature type="region of interest" description="Modulating domain" evidence="1">
    <location>
        <begin position="1"/>
        <end position="139"/>
    </location>
</feature>
<feature type="region of interest" description="Disordered" evidence="5">
    <location>
        <begin position="1"/>
        <end position="112"/>
    </location>
</feature>
<feature type="region of interest" description="Nuclear localization signal" evidence="2">
    <location>
        <begin position="165"/>
        <end position="170"/>
    </location>
</feature>
<feature type="region of interest" description="Hinge">
    <location>
        <begin position="206"/>
        <end position="229"/>
    </location>
</feature>
<feature type="region of interest" description="Disordered" evidence="5">
    <location>
        <begin position="211"/>
        <end position="233"/>
    </location>
</feature>
<feature type="region of interest" description="Required for nuclear export" evidence="2">
    <location>
        <begin position="353"/>
        <end position="373"/>
    </location>
</feature>
<feature type="compositionally biased region" description="Polar residues" evidence="5">
    <location>
        <begin position="11"/>
        <end position="25"/>
    </location>
</feature>
<feature type="compositionally biased region" description="Low complexity" evidence="5">
    <location>
        <begin position="32"/>
        <end position="52"/>
    </location>
</feature>
<feature type="compositionally biased region" description="Polar residues" evidence="5">
    <location>
        <begin position="54"/>
        <end position="63"/>
    </location>
</feature>
<feature type="compositionally biased region" description="Polar residues" evidence="5">
    <location>
        <begin position="83"/>
        <end position="109"/>
    </location>
</feature>
<feature type="compositionally biased region" description="Basic and acidic residues" evidence="5">
    <location>
        <begin position="211"/>
        <end position="223"/>
    </location>
</feature>
<feature type="binding site" evidence="2">
    <location>
        <position position="140"/>
    </location>
    <ligand>
        <name>Zn(2+)</name>
        <dbReference type="ChEBI" id="CHEBI:29105"/>
        <label>1</label>
    </ligand>
</feature>
<feature type="binding site" evidence="2">
    <location>
        <position position="143"/>
    </location>
    <ligand>
        <name>Zn(2+)</name>
        <dbReference type="ChEBI" id="CHEBI:29105"/>
        <label>1</label>
    </ligand>
</feature>
<feature type="binding site" evidence="2">
    <location>
        <position position="157"/>
    </location>
    <ligand>
        <name>Zn(2+)</name>
        <dbReference type="ChEBI" id="CHEBI:29105"/>
        <label>1</label>
    </ligand>
</feature>
<feature type="binding site" evidence="2">
    <location>
        <position position="160"/>
    </location>
    <ligand>
        <name>Zn(2+)</name>
        <dbReference type="ChEBI" id="CHEBI:29105"/>
        <label>1</label>
    </ligand>
</feature>
<feature type="binding site" evidence="2">
    <location>
        <position position="176"/>
    </location>
    <ligand>
        <name>Zn(2+)</name>
        <dbReference type="ChEBI" id="CHEBI:29105"/>
        <label>2</label>
    </ligand>
</feature>
<feature type="binding site" evidence="2">
    <location>
        <position position="182"/>
    </location>
    <ligand>
        <name>Zn(2+)</name>
        <dbReference type="ChEBI" id="CHEBI:29105"/>
        <label>2</label>
    </ligand>
</feature>
<feature type="binding site" evidence="2">
    <location>
        <position position="192"/>
    </location>
    <ligand>
        <name>Zn(2+)</name>
        <dbReference type="ChEBI" id="CHEBI:29105"/>
        <label>2</label>
    </ligand>
</feature>
<feature type="binding site" evidence="2">
    <location>
        <position position="195"/>
    </location>
    <ligand>
        <name>Zn(2+)</name>
        <dbReference type="ChEBI" id="CHEBI:29105"/>
        <label>2</label>
    </ligand>
</feature>
<feature type="binding site" evidence="11 19">
    <location>
        <position position="321"/>
    </location>
    <ligand>
        <name>9-cis-retinoate</name>
        <dbReference type="ChEBI" id="CHEBI:78630"/>
    </ligand>
</feature>
<feature type="binding site" evidence="2">
    <location>
        <position position="321"/>
    </location>
    <ligand>
        <name>all-trans-retinoate</name>
        <dbReference type="ChEBI" id="CHEBI:35291"/>
    </ligand>
</feature>
<feature type="binding site" evidence="11 19">
    <location>
        <position position="332"/>
    </location>
    <ligand>
        <name>9-cis-retinoate</name>
        <dbReference type="ChEBI" id="CHEBI:78630"/>
    </ligand>
</feature>
<feature type="binding site" evidence="2">
    <location>
        <position position="332"/>
    </location>
    <ligand>
        <name>all-trans-retinoate</name>
        <dbReference type="ChEBI" id="CHEBI:35291"/>
    </ligand>
</feature>
<feature type="modified residue" description="Phosphoserine" evidence="6 9 21">
    <location>
        <position position="22"/>
    </location>
</feature>
<feature type="modified residue" description="Phosphoserine" evidence="2">
    <location>
        <position position="28"/>
    </location>
</feature>
<feature type="modified residue" description="Phosphoserine; by MAPK8 and MAPK9" evidence="6">
    <location>
        <position position="61"/>
    </location>
</feature>
<feature type="modified residue" description="Phosphoserine; by MAPK8 and MAPK9" evidence="6">
    <location>
        <position position="75"/>
    </location>
</feature>
<feature type="modified residue" description="Phosphothreonine; by MAPK8 and MAPK9" evidence="6">
    <location>
        <position position="87"/>
    </location>
</feature>
<feature type="modified residue" description="Phosphoserine" evidence="2">
    <location>
        <position position="134"/>
    </location>
</feature>
<feature type="modified residue" description="N6-acetyllysine" evidence="2">
    <location>
        <position position="150"/>
    </location>
</feature>
<feature type="modified residue" description="Phosphoserine" evidence="2">
    <location>
        <position position="264"/>
    </location>
</feature>
<feature type="modified residue" description="Phosphoserine; by MAPK8 and MAPK9" evidence="6">
    <location>
        <position position="265"/>
    </location>
</feature>
<feature type="cross-link" description="Glycyl lysine isopeptide (Lys-Gly) (interchain with G-Cter in SUMO2)" evidence="2">
    <location>
        <position position="4"/>
    </location>
</feature>
<feature type="cross-link" description="Glycyl lysine isopeptide (Lys-Gly) (interchain with G-Cter in SUMO)" evidence="1">
    <location>
        <position position="113"/>
    </location>
</feature>
<feature type="mutagenesis site" description="Loss of constituitive phosphorylation. No effect on RXRA transcriptional activity." evidence="6 9">
    <original>S</original>
    <variation>A</variation>
    <location>
        <position position="22"/>
    </location>
</feature>
<feature type="mutagenesis site" description="No effect on constituitive phosphorylation." evidence="6">
    <original>S</original>
    <variation>A</variation>
    <location>
        <position position="44"/>
    </location>
</feature>
<feature type="mutagenesis site" description="No effect on constituitive phosphorylation." evidence="6">
    <original>S</original>
    <variation>A</variation>
    <location>
        <position position="48"/>
    </location>
</feature>
<feature type="mutagenesis site" description="No effect on constituitive phosphorylation." evidence="6">
    <original>S</original>
    <variation>A</variation>
    <location>
        <position position="54"/>
    </location>
</feature>
<feature type="mutagenesis site" description="No effect on constituitive phosphorylation, decreased stress-induced phosphorylation but no effect on RXRA transcriptional activity. Abolishes stress-induced phosphorylation but no effect on RXRA transcriptional activity; when associated with A-75 and A-87. No effect on RXRA transcriptional activity." evidence="6">
    <original>S</original>
    <variation>A</variation>
    <location>
        <position position="61"/>
    </location>
</feature>
<feature type="mutagenesis site" description="No effect on constituitive phosphorylation, decreased stress-induced phosphorylation but no effect on RXRA transcriptional activity. Abolishes stress-induced phosphorylation but no effect on RXRA transcriptional activity; when associated with A-61 and A-87." evidence="6">
    <original>S</original>
    <variation>A</variation>
    <location>
        <position position="75"/>
    </location>
</feature>
<feature type="mutagenesis site" description="No effect on constituitive phosphorylation, decreased stress-induced phosphorylation but no effect on RXRA transcriptional activity. Abolishes stress-induced phosphorylation but no effect on RXRA transcriptional activity; when associated with A-61 and A-75. phosphorylation. No effect on RXRA transcriptional activity." evidence="6">
    <original>T</original>
    <variation>A</variation>
    <location>
        <position position="87"/>
    </location>
</feature>
<feature type="mutagenesis site" description="No effect on constituitive phosphorylation." evidence="6">
    <original>S</original>
    <variation>A</variation>
    <location>
        <position position="96"/>
    </location>
</feature>
<feature type="mutagenesis site" description="No effect on constituitive phosphorylation." evidence="6">
    <original>S</original>
    <variation>A</variation>
    <location>
        <position position="101"/>
    </location>
</feature>
<feature type="mutagenesis site" description="No effect on constiuitive phosphorylation but loss of stress-induced phosphorylation. No effect on RXRA transcriptional activity." evidence="6">
    <original>S</original>
    <variation>A</variation>
    <location>
        <position position="265"/>
    </location>
</feature>
<feature type="mutagenesis site" description="Abolishes interaction with ASXL1 and NCOA1." evidence="12">
    <original>FL</original>
    <variation>AA</variation>
    <location>
        <begin position="455"/>
        <end position="456"/>
    </location>
</feature>
<feature type="mutagenesis site" description="Abolishes interaction with ASXL1 and NCOA1." evidence="12">
    <original>ML</original>
    <variation>AA</variation>
    <location>
        <begin position="459"/>
        <end position="460"/>
    </location>
</feature>
<feature type="turn" evidence="25">
    <location>
        <begin position="141"/>
        <end position="143"/>
    </location>
</feature>
<feature type="strand" evidence="25">
    <location>
        <begin position="149"/>
        <end position="151"/>
    </location>
</feature>
<feature type="helix" evidence="25">
    <location>
        <begin position="158"/>
        <end position="170"/>
    </location>
</feature>
<feature type="strand" evidence="25">
    <location>
        <begin position="177"/>
        <end position="180"/>
    </location>
</feature>
<feature type="turn" evidence="25">
    <location>
        <begin position="186"/>
        <end position="190"/>
    </location>
</feature>
<feature type="helix" evidence="25">
    <location>
        <begin position="193"/>
        <end position="202"/>
    </location>
</feature>
<feature type="helix" evidence="22">
    <location>
        <begin position="231"/>
        <end position="234"/>
    </location>
</feature>
<feature type="helix" evidence="24">
    <location>
        <begin position="237"/>
        <end position="245"/>
    </location>
</feature>
<feature type="helix" evidence="24">
    <location>
        <begin position="269"/>
        <end position="290"/>
    </location>
</feature>
<feature type="helix" evidence="24">
    <location>
        <begin position="294"/>
        <end position="296"/>
    </location>
</feature>
<feature type="helix" evidence="24">
    <location>
        <begin position="299"/>
        <end position="321"/>
    </location>
</feature>
<feature type="turn" evidence="24">
    <location>
        <begin position="322"/>
        <end position="324"/>
    </location>
</feature>
<feature type="strand" evidence="24">
    <location>
        <begin position="325"/>
        <end position="330"/>
    </location>
</feature>
<feature type="strand" evidence="24">
    <location>
        <begin position="336"/>
        <end position="338"/>
    </location>
</feature>
<feature type="helix" evidence="24">
    <location>
        <begin position="339"/>
        <end position="344"/>
    </location>
</feature>
<feature type="helix" evidence="24">
    <location>
        <begin position="348"/>
        <end position="357"/>
    </location>
</feature>
<feature type="helix" evidence="24">
    <location>
        <begin position="359"/>
        <end position="365"/>
    </location>
</feature>
<feature type="helix" evidence="24">
    <location>
        <begin position="369"/>
        <end position="380"/>
    </location>
</feature>
<feature type="helix" evidence="24">
    <location>
        <begin position="391"/>
        <end position="412"/>
    </location>
</feature>
<feature type="helix" evidence="24">
    <location>
        <begin position="419"/>
        <end position="424"/>
    </location>
</feature>
<feature type="helix" evidence="24">
    <location>
        <begin position="427"/>
        <end position="447"/>
    </location>
</feature>
<feature type="helix" evidence="23">
    <location>
        <begin position="451"/>
        <end position="453"/>
    </location>
</feature>
<feature type="helix" evidence="24">
    <location>
        <begin position="454"/>
        <end position="459"/>
    </location>
</feature>
<name>RXRA_MOUSE</name>
<proteinExistence type="evidence at protein level"/>
<gene>
    <name type="primary">Rxra</name>
    <name type="synonym">Nr2b1</name>
</gene>